<evidence type="ECO:0000255" key="1">
    <source>
        <dbReference type="HAMAP-Rule" id="MF_00115"/>
    </source>
</evidence>
<accession>B7KPQ5</accession>
<feature type="chain" id="PRO_1000191378" description="Large-conductance mechanosensitive channel">
    <location>
        <begin position="1"/>
        <end position="141"/>
    </location>
</feature>
<feature type="transmembrane region" description="Helical" evidence="1">
    <location>
        <begin position="14"/>
        <end position="34"/>
    </location>
</feature>
<feature type="transmembrane region" description="Helical" evidence="1">
    <location>
        <begin position="38"/>
        <end position="58"/>
    </location>
</feature>
<feature type="transmembrane region" description="Helical" evidence="1">
    <location>
        <begin position="82"/>
        <end position="102"/>
    </location>
</feature>
<organism>
    <name type="scientific">Methylorubrum extorquens (strain CM4 / NCIMB 13688)</name>
    <name type="common">Methylobacterium extorquens</name>
    <dbReference type="NCBI Taxonomy" id="440085"/>
    <lineage>
        <taxon>Bacteria</taxon>
        <taxon>Pseudomonadati</taxon>
        <taxon>Pseudomonadota</taxon>
        <taxon>Alphaproteobacteria</taxon>
        <taxon>Hyphomicrobiales</taxon>
        <taxon>Methylobacteriaceae</taxon>
        <taxon>Methylorubrum</taxon>
    </lineage>
</organism>
<sequence>MLEEFKKFALRGNVVDLAVGVIIGAAFGAIVNSLVQDVIMPIIGAVTGGLDFSNYYIPLSSKVQDGMPYAEAKKVGAVIGYGQFLTLAVNFTIIAFVLFMVIRAMNVLKSREEAKPKPVAEVPADVKLLGEIRDLLAARRV</sequence>
<comment type="function">
    <text evidence="1">Channel that opens in response to stretch forces in the membrane lipid bilayer. May participate in the regulation of osmotic pressure changes within the cell.</text>
</comment>
<comment type="subunit">
    <text evidence="1">Homopentamer.</text>
</comment>
<comment type="subcellular location">
    <subcellularLocation>
        <location evidence="1">Cell inner membrane</location>
        <topology evidence="1">Multi-pass membrane protein</topology>
    </subcellularLocation>
</comment>
<comment type="similarity">
    <text evidence="1">Belongs to the MscL family.</text>
</comment>
<gene>
    <name evidence="1" type="primary">mscL</name>
    <name type="ordered locus">Mchl_2802</name>
</gene>
<protein>
    <recommendedName>
        <fullName evidence="1">Large-conductance mechanosensitive channel</fullName>
    </recommendedName>
</protein>
<name>MSCL_METC4</name>
<dbReference type="EMBL" id="CP001298">
    <property type="protein sequence ID" value="ACK83641.1"/>
    <property type="molecule type" value="Genomic_DNA"/>
</dbReference>
<dbReference type="RefSeq" id="WP_003600729.1">
    <property type="nucleotide sequence ID" value="NC_011757.1"/>
</dbReference>
<dbReference type="SMR" id="B7KPQ5"/>
<dbReference type="KEGG" id="mch:Mchl_2802"/>
<dbReference type="HOGENOM" id="CLU_095787_0_1_5"/>
<dbReference type="Proteomes" id="UP000002385">
    <property type="component" value="Chromosome"/>
</dbReference>
<dbReference type="GO" id="GO:0005886">
    <property type="term" value="C:plasma membrane"/>
    <property type="evidence" value="ECO:0007669"/>
    <property type="project" value="UniProtKB-SubCell"/>
</dbReference>
<dbReference type="GO" id="GO:0008381">
    <property type="term" value="F:mechanosensitive monoatomic ion channel activity"/>
    <property type="evidence" value="ECO:0007669"/>
    <property type="project" value="UniProtKB-UniRule"/>
</dbReference>
<dbReference type="Gene3D" id="1.10.1200.120">
    <property type="entry name" value="Large-conductance mechanosensitive channel, MscL, domain 1"/>
    <property type="match status" value="1"/>
</dbReference>
<dbReference type="HAMAP" id="MF_00115">
    <property type="entry name" value="MscL"/>
    <property type="match status" value="1"/>
</dbReference>
<dbReference type="InterPro" id="IPR019823">
    <property type="entry name" value="Mechanosensitive_channel_CS"/>
</dbReference>
<dbReference type="InterPro" id="IPR001185">
    <property type="entry name" value="MS_channel"/>
</dbReference>
<dbReference type="InterPro" id="IPR037673">
    <property type="entry name" value="MSC/AndL"/>
</dbReference>
<dbReference type="InterPro" id="IPR036019">
    <property type="entry name" value="MscL_channel"/>
</dbReference>
<dbReference type="NCBIfam" id="TIGR00220">
    <property type="entry name" value="mscL"/>
    <property type="match status" value="1"/>
</dbReference>
<dbReference type="NCBIfam" id="NF001843">
    <property type="entry name" value="PRK00567.1-4"/>
    <property type="match status" value="1"/>
</dbReference>
<dbReference type="NCBIfam" id="NF010557">
    <property type="entry name" value="PRK13952.1"/>
    <property type="match status" value="1"/>
</dbReference>
<dbReference type="PANTHER" id="PTHR30266:SF2">
    <property type="entry name" value="LARGE-CONDUCTANCE MECHANOSENSITIVE CHANNEL"/>
    <property type="match status" value="1"/>
</dbReference>
<dbReference type="PANTHER" id="PTHR30266">
    <property type="entry name" value="MECHANOSENSITIVE CHANNEL MSCL"/>
    <property type="match status" value="1"/>
</dbReference>
<dbReference type="Pfam" id="PF01741">
    <property type="entry name" value="MscL"/>
    <property type="match status" value="1"/>
</dbReference>
<dbReference type="PRINTS" id="PR01264">
    <property type="entry name" value="MECHCHANNEL"/>
</dbReference>
<dbReference type="SUPFAM" id="SSF81330">
    <property type="entry name" value="Gated mechanosensitive channel"/>
    <property type="match status" value="1"/>
</dbReference>
<dbReference type="PROSITE" id="PS01327">
    <property type="entry name" value="MSCL"/>
    <property type="match status" value="1"/>
</dbReference>
<keyword id="KW-0997">Cell inner membrane</keyword>
<keyword id="KW-1003">Cell membrane</keyword>
<keyword id="KW-0407">Ion channel</keyword>
<keyword id="KW-0406">Ion transport</keyword>
<keyword id="KW-0472">Membrane</keyword>
<keyword id="KW-0812">Transmembrane</keyword>
<keyword id="KW-1133">Transmembrane helix</keyword>
<keyword id="KW-0813">Transport</keyword>
<proteinExistence type="inferred from homology"/>
<reference key="1">
    <citation type="submission" date="2008-12" db="EMBL/GenBank/DDBJ databases">
        <title>Complete sequence of chromosome of Methylobacterium chloromethanicum CM4.</title>
        <authorList>
            <consortium name="US DOE Joint Genome Institute"/>
            <person name="Lucas S."/>
            <person name="Copeland A."/>
            <person name="Lapidus A."/>
            <person name="Glavina del Rio T."/>
            <person name="Dalin E."/>
            <person name="Tice H."/>
            <person name="Bruce D."/>
            <person name="Goodwin L."/>
            <person name="Pitluck S."/>
            <person name="Chertkov O."/>
            <person name="Brettin T."/>
            <person name="Detter J.C."/>
            <person name="Han C."/>
            <person name="Larimer F."/>
            <person name="Land M."/>
            <person name="Hauser L."/>
            <person name="Kyrpides N."/>
            <person name="Mikhailova N."/>
            <person name="Marx C."/>
            <person name="Richardson P."/>
        </authorList>
    </citation>
    <scope>NUCLEOTIDE SEQUENCE [LARGE SCALE GENOMIC DNA]</scope>
    <source>
        <strain>CM4 / NCIMB 13688</strain>
    </source>
</reference>